<organism>
    <name type="scientific">Salinibacter ruber (strain DSM 13855 / M31)</name>
    <dbReference type="NCBI Taxonomy" id="309807"/>
    <lineage>
        <taxon>Bacteria</taxon>
        <taxon>Pseudomonadati</taxon>
        <taxon>Rhodothermota</taxon>
        <taxon>Rhodothermia</taxon>
        <taxon>Rhodothermales</taxon>
        <taxon>Salinibacteraceae</taxon>
        <taxon>Salinibacter</taxon>
    </lineage>
</organism>
<accession>Q2S1N5</accession>
<sequence>MNPTQQHLADRVSGLTEEVIVGTDYFLVDVEVRGHKGTRVVEVYIDSEEEVGHDDLALISKEIGFLLDVEDVVDGSYKLELSSPGIKRPLTMPAQYRKNVGRTLRVRFESDGDEEIVVGDLTDADDEEIELELPSAERLQLPYTTITQARIELPW</sequence>
<comment type="function">
    <text evidence="1">Required for maturation of 30S ribosomal subunits.</text>
</comment>
<comment type="subcellular location">
    <subcellularLocation>
        <location evidence="1">Cytoplasm</location>
    </subcellularLocation>
</comment>
<comment type="similarity">
    <text evidence="1">Belongs to the RimP family.</text>
</comment>
<comment type="sequence caution" evidence="2">
    <conflict type="erroneous initiation">
        <sequence resource="EMBL-CDS" id="ABC45850"/>
    </conflict>
</comment>
<reference key="1">
    <citation type="journal article" date="2005" name="Proc. Natl. Acad. Sci. U.S.A.">
        <title>The genome of Salinibacter ruber: convergence and gene exchange among hyperhalophilic bacteria and archaea.</title>
        <authorList>
            <person name="Mongodin E.F."/>
            <person name="Nelson K.E."/>
            <person name="Daugherty S."/>
            <person name="DeBoy R.T."/>
            <person name="Wister J."/>
            <person name="Khouri H."/>
            <person name="Weidman J."/>
            <person name="Walsh D.A."/>
            <person name="Papke R.T."/>
            <person name="Sanchez Perez G."/>
            <person name="Sharma A.K."/>
            <person name="Nesbo C.L."/>
            <person name="MacLeod D."/>
            <person name="Bapteste E."/>
            <person name="Doolittle W.F."/>
            <person name="Charlebois R.L."/>
            <person name="Legault B."/>
            <person name="Rodriguez-Valera F."/>
        </authorList>
    </citation>
    <scope>NUCLEOTIDE SEQUENCE [LARGE SCALE GENOMIC DNA]</scope>
    <source>
        <strain>DSM 13855 / CECT 5946 / M31</strain>
    </source>
</reference>
<keyword id="KW-0963">Cytoplasm</keyword>
<keyword id="KW-1185">Reference proteome</keyword>
<keyword id="KW-0690">Ribosome biogenesis</keyword>
<gene>
    <name evidence="1" type="primary">rimP</name>
    <name type="ordered locus">SRU_1779</name>
</gene>
<protein>
    <recommendedName>
        <fullName evidence="1">Ribosome maturation factor RimP</fullName>
    </recommendedName>
</protein>
<feature type="chain" id="PRO_0000384754" description="Ribosome maturation factor RimP">
    <location>
        <begin position="1"/>
        <end position="155"/>
    </location>
</feature>
<proteinExistence type="inferred from homology"/>
<evidence type="ECO:0000255" key="1">
    <source>
        <dbReference type="HAMAP-Rule" id="MF_01077"/>
    </source>
</evidence>
<evidence type="ECO:0000305" key="2"/>
<name>RIMP_SALRD</name>
<dbReference type="EMBL" id="CP000159">
    <property type="protein sequence ID" value="ABC45850.1"/>
    <property type="status" value="ALT_INIT"/>
    <property type="molecule type" value="Genomic_DNA"/>
</dbReference>
<dbReference type="RefSeq" id="YP_445896.1">
    <property type="nucleotide sequence ID" value="NC_007677.1"/>
</dbReference>
<dbReference type="SMR" id="Q2S1N5"/>
<dbReference type="STRING" id="309807.SRU_1779"/>
<dbReference type="EnsemblBacteria" id="ABC45850">
    <property type="protein sequence ID" value="ABC45850"/>
    <property type="gene ID" value="SRU_1779"/>
</dbReference>
<dbReference type="KEGG" id="sru:SRU_1779"/>
<dbReference type="eggNOG" id="COG0779">
    <property type="taxonomic scope" value="Bacteria"/>
</dbReference>
<dbReference type="HOGENOM" id="CLU_070525_2_2_10"/>
<dbReference type="OrthoDB" id="9789702at2"/>
<dbReference type="Proteomes" id="UP000008674">
    <property type="component" value="Chromosome"/>
</dbReference>
<dbReference type="GO" id="GO:0005829">
    <property type="term" value="C:cytosol"/>
    <property type="evidence" value="ECO:0007669"/>
    <property type="project" value="TreeGrafter"/>
</dbReference>
<dbReference type="GO" id="GO:0000028">
    <property type="term" value="P:ribosomal small subunit assembly"/>
    <property type="evidence" value="ECO:0007669"/>
    <property type="project" value="TreeGrafter"/>
</dbReference>
<dbReference type="GO" id="GO:0006412">
    <property type="term" value="P:translation"/>
    <property type="evidence" value="ECO:0007669"/>
    <property type="project" value="TreeGrafter"/>
</dbReference>
<dbReference type="CDD" id="cd01734">
    <property type="entry name" value="YlxS_C"/>
    <property type="match status" value="1"/>
</dbReference>
<dbReference type="Gene3D" id="3.30.300.70">
    <property type="entry name" value="RimP-like superfamily, N-terminal"/>
    <property type="match status" value="1"/>
</dbReference>
<dbReference type="HAMAP" id="MF_01077">
    <property type="entry name" value="RimP"/>
    <property type="match status" value="1"/>
</dbReference>
<dbReference type="InterPro" id="IPR003728">
    <property type="entry name" value="Ribosome_maturation_RimP"/>
</dbReference>
<dbReference type="InterPro" id="IPR028998">
    <property type="entry name" value="RimP_C"/>
</dbReference>
<dbReference type="InterPro" id="IPR036847">
    <property type="entry name" value="RimP_C_sf"/>
</dbReference>
<dbReference type="InterPro" id="IPR028989">
    <property type="entry name" value="RimP_N"/>
</dbReference>
<dbReference type="InterPro" id="IPR035956">
    <property type="entry name" value="RimP_N_sf"/>
</dbReference>
<dbReference type="PANTHER" id="PTHR33867">
    <property type="entry name" value="RIBOSOME MATURATION FACTOR RIMP"/>
    <property type="match status" value="1"/>
</dbReference>
<dbReference type="PANTHER" id="PTHR33867:SF1">
    <property type="entry name" value="RIBOSOME MATURATION FACTOR RIMP"/>
    <property type="match status" value="1"/>
</dbReference>
<dbReference type="Pfam" id="PF17384">
    <property type="entry name" value="DUF150_C"/>
    <property type="match status" value="1"/>
</dbReference>
<dbReference type="Pfam" id="PF02576">
    <property type="entry name" value="RimP_N"/>
    <property type="match status" value="1"/>
</dbReference>
<dbReference type="SUPFAM" id="SSF74942">
    <property type="entry name" value="YhbC-like, C-terminal domain"/>
    <property type="match status" value="1"/>
</dbReference>
<dbReference type="SUPFAM" id="SSF75420">
    <property type="entry name" value="YhbC-like, N-terminal domain"/>
    <property type="match status" value="1"/>
</dbReference>